<keyword id="KW-1003">Cell membrane</keyword>
<keyword id="KW-1015">Disulfide bond</keyword>
<keyword id="KW-0297">G-protein coupled receptor</keyword>
<keyword id="KW-0325">Glycoprotein</keyword>
<keyword id="KW-0472">Membrane</keyword>
<keyword id="KW-0552">Olfaction</keyword>
<keyword id="KW-0675">Receptor</keyword>
<keyword id="KW-1185">Reference proteome</keyword>
<keyword id="KW-0716">Sensory transduction</keyword>
<keyword id="KW-0807">Transducer</keyword>
<keyword id="KW-0812">Transmembrane</keyword>
<keyword id="KW-1133">Transmembrane helix</keyword>
<comment type="function">
    <text evidence="3">Odorant receptor.</text>
</comment>
<comment type="subcellular location">
    <subcellularLocation>
        <location>Cell membrane</location>
        <topology>Multi-pass membrane protein</topology>
    </subcellularLocation>
</comment>
<comment type="similarity">
    <text evidence="2">Belongs to the G-protein coupled receptor 1 family.</text>
</comment>
<comment type="online information" name="Human Olfactory Receptor Data Exploratorium (HORDE)">
    <link uri="http://genome.weizmann.ac.il/horde/card/index/symbol:OR2T2"/>
</comment>
<reference key="1">
    <citation type="journal article" date="2006" name="Nature">
        <title>The DNA sequence and biological annotation of human chromosome 1.</title>
        <authorList>
            <person name="Gregory S.G."/>
            <person name="Barlow K.F."/>
            <person name="McLay K.E."/>
            <person name="Kaul R."/>
            <person name="Swarbreck D."/>
            <person name="Dunham A."/>
            <person name="Scott C.E."/>
            <person name="Howe K.L."/>
            <person name="Woodfine K."/>
            <person name="Spencer C.C.A."/>
            <person name="Jones M.C."/>
            <person name="Gillson C."/>
            <person name="Searle S."/>
            <person name="Zhou Y."/>
            <person name="Kokocinski F."/>
            <person name="McDonald L."/>
            <person name="Evans R."/>
            <person name="Phillips K."/>
            <person name="Atkinson A."/>
            <person name="Cooper R."/>
            <person name="Jones C."/>
            <person name="Hall R.E."/>
            <person name="Andrews T.D."/>
            <person name="Lloyd C."/>
            <person name="Ainscough R."/>
            <person name="Almeida J.P."/>
            <person name="Ambrose K.D."/>
            <person name="Anderson F."/>
            <person name="Andrew R.W."/>
            <person name="Ashwell R.I.S."/>
            <person name="Aubin K."/>
            <person name="Babbage A.K."/>
            <person name="Bagguley C.L."/>
            <person name="Bailey J."/>
            <person name="Beasley H."/>
            <person name="Bethel G."/>
            <person name="Bird C.P."/>
            <person name="Bray-Allen S."/>
            <person name="Brown J.Y."/>
            <person name="Brown A.J."/>
            <person name="Buckley D."/>
            <person name="Burton J."/>
            <person name="Bye J."/>
            <person name="Carder C."/>
            <person name="Chapman J.C."/>
            <person name="Clark S.Y."/>
            <person name="Clarke G."/>
            <person name="Clee C."/>
            <person name="Cobley V."/>
            <person name="Collier R.E."/>
            <person name="Corby N."/>
            <person name="Coville G.J."/>
            <person name="Davies J."/>
            <person name="Deadman R."/>
            <person name="Dunn M."/>
            <person name="Earthrowl M."/>
            <person name="Ellington A.G."/>
            <person name="Errington H."/>
            <person name="Frankish A."/>
            <person name="Frankland J."/>
            <person name="French L."/>
            <person name="Garner P."/>
            <person name="Garnett J."/>
            <person name="Gay L."/>
            <person name="Ghori M.R.J."/>
            <person name="Gibson R."/>
            <person name="Gilby L.M."/>
            <person name="Gillett W."/>
            <person name="Glithero R.J."/>
            <person name="Grafham D.V."/>
            <person name="Griffiths C."/>
            <person name="Griffiths-Jones S."/>
            <person name="Grocock R."/>
            <person name="Hammond S."/>
            <person name="Harrison E.S.I."/>
            <person name="Hart E."/>
            <person name="Haugen E."/>
            <person name="Heath P.D."/>
            <person name="Holmes S."/>
            <person name="Holt K."/>
            <person name="Howden P.J."/>
            <person name="Hunt A.R."/>
            <person name="Hunt S.E."/>
            <person name="Hunter G."/>
            <person name="Isherwood J."/>
            <person name="James R."/>
            <person name="Johnson C."/>
            <person name="Johnson D."/>
            <person name="Joy A."/>
            <person name="Kay M."/>
            <person name="Kershaw J.K."/>
            <person name="Kibukawa M."/>
            <person name="Kimberley A.M."/>
            <person name="King A."/>
            <person name="Knights A.J."/>
            <person name="Lad H."/>
            <person name="Laird G."/>
            <person name="Lawlor S."/>
            <person name="Leongamornlert D.A."/>
            <person name="Lloyd D.M."/>
            <person name="Loveland J."/>
            <person name="Lovell J."/>
            <person name="Lush M.J."/>
            <person name="Lyne R."/>
            <person name="Martin S."/>
            <person name="Mashreghi-Mohammadi M."/>
            <person name="Matthews L."/>
            <person name="Matthews N.S.W."/>
            <person name="McLaren S."/>
            <person name="Milne S."/>
            <person name="Mistry S."/>
            <person name="Moore M.J.F."/>
            <person name="Nickerson T."/>
            <person name="O'Dell C.N."/>
            <person name="Oliver K."/>
            <person name="Palmeiri A."/>
            <person name="Palmer S.A."/>
            <person name="Parker A."/>
            <person name="Patel D."/>
            <person name="Pearce A.V."/>
            <person name="Peck A.I."/>
            <person name="Pelan S."/>
            <person name="Phelps K."/>
            <person name="Phillimore B.J."/>
            <person name="Plumb R."/>
            <person name="Rajan J."/>
            <person name="Raymond C."/>
            <person name="Rouse G."/>
            <person name="Saenphimmachak C."/>
            <person name="Sehra H.K."/>
            <person name="Sheridan E."/>
            <person name="Shownkeen R."/>
            <person name="Sims S."/>
            <person name="Skuce C.D."/>
            <person name="Smith M."/>
            <person name="Steward C."/>
            <person name="Subramanian S."/>
            <person name="Sycamore N."/>
            <person name="Tracey A."/>
            <person name="Tromans A."/>
            <person name="Van Helmond Z."/>
            <person name="Wall M."/>
            <person name="Wallis J.M."/>
            <person name="White S."/>
            <person name="Whitehead S.L."/>
            <person name="Wilkinson J.E."/>
            <person name="Willey D.L."/>
            <person name="Williams H."/>
            <person name="Wilming L."/>
            <person name="Wray P.W."/>
            <person name="Wu Z."/>
            <person name="Coulson A."/>
            <person name="Vaudin M."/>
            <person name="Sulston J.E."/>
            <person name="Durbin R.M."/>
            <person name="Hubbard T."/>
            <person name="Wooster R."/>
            <person name="Dunham I."/>
            <person name="Carter N.P."/>
            <person name="McVean G."/>
            <person name="Ross M.T."/>
            <person name="Harrow J."/>
            <person name="Olson M.V."/>
            <person name="Beck S."/>
            <person name="Rogers J."/>
            <person name="Bentley D.R."/>
        </authorList>
    </citation>
    <scope>NUCLEOTIDE SEQUENCE [LARGE SCALE GENOMIC DNA]</scope>
</reference>
<reference key="2">
    <citation type="journal article" date="2004" name="Genome Res.">
        <title>The status, quality, and expansion of the NIH full-length cDNA project: the Mammalian Gene Collection (MGC).</title>
        <authorList>
            <consortium name="The MGC Project Team"/>
        </authorList>
    </citation>
    <scope>NUCLEOTIDE SEQUENCE [LARGE SCALE MRNA]</scope>
    <source>
        <tissue>Testis</tissue>
    </source>
</reference>
<reference key="3">
    <citation type="journal article" date="2004" name="Proc. Natl. Acad. Sci. U.S.A.">
        <title>The human olfactory receptor gene family.</title>
        <authorList>
            <person name="Malnic B."/>
            <person name="Godfrey P.A."/>
            <person name="Buck L.B."/>
        </authorList>
    </citation>
    <scope>IDENTIFICATION</scope>
</reference>
<reference key="4">
    <citation type="journal article" date="2004" name="Proc. Natl. Acad. Sci. U.S.A.">
        <authorList>
            <person name="Malnic B."/>
            <person name="Godfrey P.A."/>
            <person name="Buck L.B."/>
        </authorList>
    </citation>
    <scope>ERRATUM OF PUBMED:14983052</scope>
</reference>
<gene>
    <name type="primary">OR2T2</name>
    <name type="synonym">OR2T2P</name>
</gene>
<feature type="chain" id="PRO_0000150497" description="Olfactory receptor 2T2">
    <location>
        <begin position="1"/>
        <end position="324"/>
    </location>
</feature>
<feature type="topological domain" description="Extracellular" evidence="1">
    <location>
        <begin position="1"/>
        <end position="26"/>
    </location>
</feature>
<feature type="transmembrane region" description="Helical; Name=1" evidence="1">
    <location>
        <begin position="27"/>
        <end position="50"/>
    </location>
</feature>
<feature type="topological domain" description="Cytoplasmic" evidence="1">
    <location>
        <begin position="51"/>
        <end position="58"/>
    </location>
</feature>
<feature type="transmembrane region" description="Helical; Name=2" evidence="1">
    <location>
        <begin position="59"/>
        <end position="80"/>
    </location>
</feature>
<feature type="topological domain" description="Extracellular" evidence="1">
    <location>
        <begin position="81"/>
        <end position="101"/>
    </location>
</feature>
<feature type="transmembrane region" description="Helical; Name=3" evidence="1">
    <location>
        <begin position="102"/>
        <end position="121"/>
    </location>
</feature>
<feature type="topological domain" description="Cytoplasmic" evidence="1">
    <location>
        <begin position="122"/>
        <end position="140"/>
    </location>
</feature>
<feature type="transmembrane region" description="Helical; Name=4" evidence="1">
    <location>
        <begin position="141"/>
        <end position="159"/>
    </location>
</feature>
<feature type="topological domain" description="Extracellular" evidence="1">
    <location>
        <begin position="160"/>
        <end position="196"/>
    </location>
</feature>
<feature type="transmembrane region" description="Helical; Name=5" evidence="1">
    <location>
        <begin position="197"/>
        <end position="220"/>
    </location>
</feature>
<feature type="topological domain" description="Cytoplasmic" evidence="1">
    <location>
        <begin position="221"/>
        <end position="237"/>
    </location>
</feature>
<feature type="transmembrane region" description="Helical; Name=6" evidence="1">
    <location>
        <begin position="238"/>
        <end position="260"/>
    </location>
</feature>
<feature type="topological domain" description="Extracellular" evidence="1">
    <location>
        <begin position="261"/>
        <end position="273"/>
    </location>
</feature>
<feature type="transmembrane region" description="Helical; Name=7" evidence="1">
    <location>
        <begin position="274"/>
        <end position="293"/>
    </location>
</feature>
<feature type="topological domain" description="Cytoplasmic" evidence="1">
    <location>
        <begin position="294"/>
        <end position="324"/>
    </location>
</feature>
<feature type="glycosylation site" description="N-linked (GlcNAc...) asparagine" evidence="1">
    <location>
        <position position="9"/>
    </location>
</feature>
<feature type="disulfide bond" evidence="2">
    <location>
        <begin position="98"/>
        <end position="190"/>
    </location>
</feature>
<name>OR2T2_HUMAN</name>
<dbReference type="EMBL" id="AC138089">
    <property type="status" value="NOT_ANNOTATED_CDS"/>
    <property type="molecule type" value="Genomic_DNA"/>
</dbReference>
<dbReference type="EMBL" id="BC136961">
    <property type="protein sequence ID" value="AAI36962.1"/>
    <property type="molecule type" value="mRNA"/>
</dbReference>
<dbReference type="EMBL" id="BC136962">
    <property type="protein sequence ID" value="AAI36963.1"/>
    <property type="molecule type" value="mRNA"/>
</dbReference>
<dbReference type="EMBL" id="BK004462">
    <property type="protein sequence ID" value="DAA04860.1"/>
    <property type="molecule type" value="Genomic_DNA"/>
</dbReference>
<dbReference type="CCDS" id="CCDS31116.1"/>
<dbReference type="RefSeq" id="NP_001004136.1">
    <property type="nucleotide sequence ID" value="NM_001004136.2"/>
</dbReference>
<dbReference type="SMR" id="Q6IF00"/>
<dbReference type="BioGRID" id="135300">
    <property type="interactions" value="3"/>
</dbReference>
<dbReference type="FunCoup" id="Q6IF00">
    <property type="interactions" value="1003"/>
</dbReference>
<dbReference type="IntAct" id="Q6IF00">
    <property type="interactions" value="1"/>
</dbReference>
<dbReference type="STRING" id="9606.ENSP00000492947"/>
<dbReference type="GlyCosmos" id="Q6IF00">
    <property type="glycosylation" value="1 site, No reported glycans"/>
</dbReference>
<dbReference type="GlyGen" id="Q6IF00">
    <property type="glycosylation" value="1 site"/>
</dbReference>
<dbReference type="iPTMnet" id="Q6IF00"/>
<dbReference type="PhosphoSitePlus" id="Q6IF00"/>
<dbReference type="BioMuta" id="OR2T2"/>
<dbReference type="DMDM" id="74762309"/>
<dbReference type="MassIVE" id="Q6IF00"/>
<dbReference type="PaxDb" id="9606-ENSP00000343062"/>
<dbReference type="PeptideAtlas" id="Q6IF00"/>
<dbReference type="Antibodypedia" id="57440">
    <property type="antibodies" value="39 antibodies from 13 providers"/>
</dbReference>
<dbReference type="DNASU" id="401992"/>
<dbReference type="Ensembl" id="ENST00000610282.1">
    <property type="protein sequence ID" value="ENSP00000482837.1"/>
    <property type="gene ID" value="ENSG00000276821.1"/>
</dbReference>
<dbReference type="Ensembl" id="ENST00000616594.2">
    <property type="protein sequence ID" value="ENSP00000481002.1"/>
    <property type="gene ID" value="ENSG00000275754.2"/>
</dbReference>
<dbReference type="Ensembl" id="ENST00000641925.2">
    <property type="protein sequence ID" value="ENSP00000492947.1"/>
    <property type="gene ID" value="ENSG00000196240.6"/>
</dbReference>
<dbReference type="Ensembl" id="ENST00000642130.1">
    <property type="protein sequence ID" value="ENSP00000493326.1"/>
    <property type="gene ID" value="ENSG00000196240.6"/>
</dbReference>
<dbReference type="Ensembl" id="ENST00000709578.1">
    <property type="protein sequence ID" value="ENSP00000517772.1"/>
    <property type="gene ID" value="ENSG00000292018.1"/>
</dbReference>
<dbReference type="Ensembl" id="ENST00000709579.1">
    <property type="protein sequence ID" value="ENSP00000517773.1"/>
    <property type="gene ID" value="ENSG00000292018.1"/>
</dbReference>
<dbReference type="GeneID" id="401992"/>
<dbReference type="KEGG" id="hsa:401992"/>
<dbReference type="MANE-Select" id="ENST00000641925.2">
    <property type="protein sequence ID" value="ENSP00000492947.1"/>
    <property type="RefSeq nucleotide sequence ID" value="NM_001004136.2"/>
    <property type="RefSeq protein sequence ID" value="NP_001004136.1"/>
</dbReference>
<dbReference type="UCSC" id="uc001iek.1">
    <property type="organism name" value="human"/>
</dbReference>
<dbReference type="AGR" id="HGNC:14725"/>
<dbReference type="CTD" id="401992"/>
<dbReference type="GeneCards" id="OR2T2"/>
<dbReference type="HGNC" id="HGNC:14725">
    <property type="gene designation" value="OR2T2"/>
</dbReference>
<dbReference type="HPA" id="ENSG00000196240">
    <property type="expression patterns" value="Not detected"/>
</dbReference>
<dbReference type="neXtProt" id="NX_Q6IF00"/>
<dbReference type="PharmGKB" id="PA32202"/>
<dbReference type="VEuPathDB" id="HostDB:ENSG00000196240"/>
<dbReference type="eggNOG" id="ENOG502T9MD">
    <property type="taxonomic scope" value="Eukaryota"/>
</dbReference>
<dbReference type="GeneTree" id="ENSGT01130000278260"/>
<dbReference type="HOGENOM" id="CLU_012526_1_0_1"/>
<dbReference type="InParanoid" id="Q6IF00"/>
<dbReference type="OMA" id="SISYTHI"/>
<dbReference type="OrthoDB" id="10017003at2759"/>
<dbReference type="PAN-GO" id="Q6IF00">
    <property type="GO annotations" value="0 GO annotations based on evolutionary models"/>
</dbReference>
<dbReference type="PhylomeDB" id="Q6IF00"/>
<dbReference type="TreeFam" id="TF337295"/>
<dbReference type="PathwayCommons" id="Q6IF00"/>
<dbReference type="Reactome" id="R-HSA-9752946">
    <property type="pathway name" value="Expression and translocation of olfactory receptors"/>
</dbReference>
<dbReference type="BioGRID-ORCS" id="401992">
    <property type="hits" value="19 hits in 628 CRISPR screens"/>
</dbReference>
<dbReference type="GeneWiki" id="OR2T2"/>
<dbReference type="GenomeRNAi" id="401992"/>
<dbReference type="Pharos" id="Q6IF00">
    <property type="development level" value="Tdark"/>
</dbReference>
<dbReference type="PRO" id="PR:Q6IF00"/>
<dbReference type="Proteomes" id="UP000005640">
    <property type="component" value="Chromosome 1"/>
</dbReference>
<dbReference type="RNAct" id="Q6IF00">
    <property type="molecule type" value="protein"/>
</dbReference>
<dbReference type="Bgee" id="ENSG00000196240">
    <property type="expression patterns" value="Expressed in adult mammalian kidney and 5 other cell types or tissues"/>
</dbReference>
<dbReference type="GO" id="GO:0005886">
    <property type="term" value="C:plasma membrane"/>
    <property type="evidence" value="ECO:0000318"/>
    <property type="project" value="GO_Central"/>
</dbReference>
<dbReference type="GO" id="GO:0004930">
    <property type="term" value="F:G protein-coupled receptor activity"/>
    <property type="evidence" value="ECO:0007669"/>
    <property type="project" value="UniProtKB-KW"/>
</dbReference>
<dbReference type="GO" id="GO:0004984">
    <property type="term" value="F:olfactory receptor activity"/>
    <property type="evidence" value="ECO:0000318"/>
    <property type="project" value="GO_Central"/>
</dbReference>
<dbReference type="GO" id="GO:0050911">
    <property type="term" value="P:detection of chemical stimulus involved in sensory perception of smell"/>
    <property type="evidence" value="ECO:0000318"/>
    <property type="project" value="GO_Central"/>
</dbReference>
<dbReference type="CDD" id="cd15421">
    <property type="entry name" value="7tmA_OR2T-like"/>
    <property type="match status" value="1"/>
</dbReference>
<dbReference type="FunFam" id="1.20.1070.10:FF:000008">
    <property type="entry name" value="Olfactory receptor"/>
    <property type="match status" value="1"/>
</dbReference>
<dbReference type="Gene3D" id="1.20.1070.10">
    <property type="entry name" value="Rhodopsin 7-helix transmembrane proteins"/>
    <property type="match status" value="1"/>
</dbReference>
<dbReference type="InterPro" id="IPR000276">
    <property type="entry name" value="GPCR_Rhodpsn"/>
</dbReference>
<dbReference type="InterPro" id="IPR017452">
    <property type="entry name" value="GPCR_Rhodpsn_7TM"/>
</dbReference>
<dbReference type="InterPro" id="IPR000725">
    <property type="entry name" value="Olfact_rcpt"/>
</dbReference>
<dbReference type="PANTHER" id="PTHR26453">
    <property type="entry name" value="OLFACTORY RECEPTOR"/>
    <property type="match status" value="1"/>
</dbReference>
<dbReference type="Pfam" id="PF13853">
    <property type="entry name" value="7tm_4"/>
    <property type="match status" value="1"/>
</dbReference>
<dbReference type="PRINTS" id="PR00237">
    <property type="entry name" value="GPCRRHODOPSN"/>
</dbReference>
<dbReference type="PRINTS" id="PR00245">
    <property type="entry name" value="OLFACTORYR"/>
</dbReference>
<dbReference type="SUPFAM" id="SSF81321">
    <property type="entry name" value="Family A G protein-coupled receptor-like"/>
    <property type="match status" value="1"/>
</dbReference>
<dbReference type="PROSITE" id="PS00237">
    <property type="entry name" value="G_PROTEIN_RECEP_F1_1"/>
    <property type="match status" value="1"/>
</dbReference>
<dbReference type="PROSITE" id="PS50262">
    <property type="entry name" value="G_PROTEIN_RECEP_F1_2"/>
    <property type="match status" value="1"/>
</dbReference>
<protein>
    <recommendedName>
        <fullName>Olfactory receptor 2T2</fullName>
    </recommendedName>
    <alternativeName>
        <fullName>Olfactory receptor OR1-43</fullName>
    </alternativeName>
</protein>
<evidence type="ECO:0000255" key="1"/>
<evidence type="ECO:0000255" key="2">
    <source>
        <dbReference type="PROSITE-ProRule" id="PRU00521"/>
    </source>
</evidence>
<evidence type="ECO:0000305" key="3"/>
<proteinExistence type="evidence at transcript level"/>
<sequence>MGMEGLLQNSTNFVLTGLITHPAFPGLLFAIVFSIFVVAITANLVMILLIHMDSRLHTPMYFLLSQLSIMDTIYICITVPKMLQDLLSKDKTISFLGCAVQIFLYLTLIGGEFFLLGLMAYDRYVAVCNPLRYPLLMNRRVCLFMVVGSWVGGSLDGFMLTPVTMSFPFCRSREINHFFCEIPAVLKLSCTDTSLYETLMYACCVLMLLIPLSVISVSYTHILLTVHRMNSAEGRRKAFATCSSHIMVVSVFYGAAFYTNVLPHSYHTPEKDKVVSAFYTILTPMLNPLIYSLRNKDVAAALRKVLGRCGSSQSIRVATVIRKG</sequence>
<accession>Q6IF00</accession>
<accession>B2RNM1</accession>
<accession>B9EH01</accession>
<organism>
    <name type="scientific">Homo sapiens</name>
    <name type="common">Human</name>
    <dbReference type="NCBI Taxonomy" id="9606"/>
    <lineage>
        <taxon>Eukaryota</taxon>
        <taxon>Metazoa</taxon>
        <taxon>Chordata</taxon>
        <taxon>Craniata</taxon>
        <taxon>Vertebrata</taxon>
        <taxon>Euteleostomi</taxon>
        <taxon>Mammalia</taxon>
        <taxon>Eutheria</taxon>
        <taxon>Euarchontoglires</taxon>
        <taxon>Primates</taxon>
        <taxon>Haplorrhini</taxon>
        <taxon>Catarrhini</taxon>
        <taxon>Hominidae</taxon>
        <taxon>Homo</taxon>
    </lineage>
</organism>